<name>AZUR_PSEFB</name>
<evidence type="ECO:0000250" key="1"/>
<comment type="function">
    <text>Transfers electrons from cytochrome c551 to cytochrome oxidase.</text>
</comment>
<comment type="subcellular location">
    <subcellularLocation>
        <location>Periplasm</location>
    </subcellularLocation>
</comment>
<reference key="1">
    <citation type="book" date="1971" name="Developpements recents dans l'etude chimique de la structure des proteines">
        <editorList>
            <person name="Preverio A."/>
            <person name="Pechere J.-F."/>
            <person name="Coletti-preverio M.-A."/>
        </editorList>
        <authorList>
            <person name="Ambler R.P."/>
        </authorList>
    </citation>
    <scope>PROTEIN SEQUENCE</scope>
    <source>
        <strain>ATCC 17467 / Stanier B-93</strain>
    </source>
</reference>
<protein>
    <recommendedName>
        <fullName>Azurin</fullName>
    </recommendedName>
</protein>
<keyword id="KW-0186">Copper</keyword>
<keyword id="KW-0903">Direct protein sequencing</keyword>
<keyword id="KW-1015">Disulfide bond</keyword>
<keyword id="KW-0249">Electron transport</keyword>
<keyword id="KW-0479">Metal-binding</keyword>
<keyword id="KW-0574">Periplasm</keyword>
<keyword id="KW-0813">Transport</keyword>
<dbReference type="PIR" id="A00290">
    <property type="entry name" value="AZPSBF"/>
</dbReference>
<dbReference type="SMR" id="P00284"/>
<dbReference type="GO" id="GO:0042597">
    <property type="term" value="C:periplasmic space"/>
    <property type="evidence" value="ECO:0007669"/>
    <property type="project" value="UniProtKB-SubCell"/>
</dbReference>
<dbReference type="GO" id="GO:0005507">
    <property type="term" value="F:copper ion binding"/>
    <property type="evidence" value="ECO:0007669"/>
    <property type="project" value="InterPro"/>
</dbReference>
<dbReference type="GO" id="GO:0009055">
    <property type="term" value="F:electron transfer activity"/>
    <property type="evidence" value="ECO:0007669"/>
    <property type="project" value="InterPro"/>
</dbReference>
<dbReference type="CDD" id="cd13922">
    <property type="entry name" value="Azurin"/>
    <property type="match status" value="1"/>
</dbReference>
<dbReference type="FunFam" id="2.60.40.420:FF:000040">
    <property type="entry name" value="Azurin"/>
    <property type="match status" value="1"/>
</dbReference>
<dbReference type="Gene3D" id="2.60.40.420">
    <property type="entry name" value="Cupredoxins - blue copper proteins"/>
    <property type="match status" value="1"/>
</dbReference>
<dbReference type="InterPro" id="IPR014068">
    <property type="entry name" value="Azurin"/>
</dbReference>
<dbReference type="InterPro" id="IPR000923">
    <property type="entry name" value="BlueCu_1"/>
</dbReference>
<dbReference type="InterPro" id="IPR028871">
    <property type="entry name" value="BlueCu_1_BS"/>
</dbReference>
<dbReference type="InterPro" id="IPR050845">
    <property type="entry name" value="Cu-binding_ET"/>
</dbReference>
<dbReference type="InterPro" id="IPR008972">
    <property type="entry name" value="Cupredoxin"/>
</dbReference>
<dbReference type="NCBIfam" id="TIGR02695">
    <property type="entry name" value="azurin"/>
    <property type="match status" value="1"/>
</dbReference>
<dbReference type="PANTHER" id="PTHR38439">
    <property type="entry name" value="AURACYANIN-B"/>
    <property type="match status" value="1"/>
</dbReference>
<dbReference type="PANTHER" id="PTHR38439:SF2">
    <property type="entry name" value="OUTER MEMBRANE PROTEIN H.8"/>
    <property type="match status" value="1"/>
</dbReference>
<dbReference type="Pfam" id="PF00127">
    <property type="entry name" value="Copper-bind"/>
    <property type="match status" value="1"/>
</dbReference>
<dbReference type="SUPFAM" id="SSF49503">
    <property type="entry name" value="Cupredoxins"/>
    <property type="match status" value="1"/>
</dbReference>
<dbReference type="PROSITE" id="PS00196">
    <property type="entry name" value="COPPER_BLUE"/>
    <property type="match status" value="1"/>
</dbReference>
<organism>
    <name type="scientific">Pseudomonas fluorescens biotype B</name>
    <dbReference type="NCBI Taxonomy" id="50946"/>
    <lineage>
        <taxon>Bacteria</taxon>
        <taxon>Pseudomonadati</taxon>
        <taxon>Pseudomonadota</taxon>
        <taxon>Gammaproteobacteria</taxon>
        <taxon>Pseudomonadales</taxon>
        <taxon>Pseudomonadaceae</taxon>
        <taxon>Pseudomonas</taxon>
    </lineage>
</organism>
<accession>P00284</accession>
<feature type="chain" id="PRO_0000085549" description="Azurin">
    <location>
        <begin position="1"/>
        <end position="128"/>
    </location>
</feature>
<feature type="domain" description="Plastocyanin-like">
    <location>
        <begin position="1"/>
        <end position="128"/>
    </location>
</feature>
<feature type="binding site" evidence="1">
    <location>
        <position position="46"/>
    </location>
    <ligand>
        <name>Cu cation</name>
        <dbReference type="ChEBI" id="CHEBI:23378"/>
    </ligand>
</feature>
<feature type="binding site" evidence="1">
    <location>
        <position position="112"/>
    </location>
    <ligand>
        <name>Cu cation</name>
        <dbReference type="ChEBI" id="CHEBI:23378"/>
    </ligand>
</feature>
<feature type="binding site" evidence="1">
    <location>
        <position position="117"/>
    </location>
    <ligand>
        <name>Cu cation</name>
        <dbReference type="ChEBI" id="CHEBI:23378"/>
    </ligand>
</feature>
<feature type="binding site" evidence="1">
    <location>
        <position position="121"/>
    </location>
    <ligand>
        <name>Cu cation</name>
        <dbReference type="ChEBI" id="CHEBI:23378"/>
    </ligand>
</feature>
<feature type="disulfide bond" evidence="1">
    <location>
        <begin position="3"/>
        <end position="26"/>
    </location>
</feature>
<feature type="unsure residue" description="Assigned by comparison with orthologs">
    <location>
        <position position="11"/>
    </location>
</feature>
<feature type="unsure residue" description="Assigned by comparison with orthologs">
    <location>
        <position position="12"/>
    </location>
</feature>
<feature type="unsure residue" description="Assigned by comparison with orthologs">
    <location>
        <position position="57"/>
    </location>
</feature>
<proteinExistence type="evidence at protein level"/>
<sequence length="128" mass="13799">AECKTTIDSTDQMSFNTKAIEIDKACKTFTVELTHSGSLPKNVMGHNLVISKQADMQPIATDGLSAGIDKNYLKEGDTRVIAHTKVIGAGEKDSLTIDVSKLNAAEKYGFFCSFPGHISMMKGTVTLK</sequence>